<sequence length="444" mass="49933">MVRRQEEEKKAEKGMRLGKYELGRTLGEGNFGKVKFAKDTVSGHSFAVKIIDKSRIADLNFSLQIKREIRTLKMLKHPHIVRLHEVLASKTKINMVMELVTGGELFDRIVSNGKLTETDGRKMFQQLIDGISYCHSKGVFHRDLKLENVLLDAKGHIKITDFGLSALPQHFRDDGLLHTTCGSPNYVAPEVLANRGYDGAASDIWSCGVILYVILTGCLPFDDRNLAVLYQKICKGDPPIPRWLSPGARTMIKRMLDPNPVTRITVVGIKASEWFKLEYIPSIPDDDDEEEVDTDDDAFSIQELGSEEGKGSDSPTIINAFQLIGMSSFLDLSGFFEQENVSERRIRFTSNSSAKDLLEKIETAVTEMGFSVQKKHAKLRVKQEERNQKGQVGLSVTAEVFEIKPSLNVVELRKSYGDSCLYRQLYERLLKDVGTSSPEQEIVT</sequence>
<proteinExistence type="evidence at protein level"/>
<dbReference type="EC" id="2.7.11.1"/>
<dbReference type="EMBL" id="AF302112">
    <property type="protein sequence ID" value="AAG28776.1"/>
    <property type="molecule type" value="mRNA"/>
</dbReference>
<dbReference type="EMBL" id="AB022219">
    <property type="protein sequence ID" value="BAB02040.1"/>
    <property type="status" value="ALT_SEQ"/>
    <property type="molecule type" value="Genomic_DNA"/>
</dbReference>
<dbReference type="EMBL" id="CP002686">
    <property type="protein sequence ID" value="AEE75962.1"/>
    <property type="molecule type" value="Genomic_DNA"/>
</dbReference>
<dbReference type="EMBL" id="CP002686">
    <property type="protein sequence ID" value="AEE75963.1"/>
    <property type="molecule type" value="Genomic_DNA"/>
</dbReference>
<dbReference type="EMBL" id="AY093177">
    <property type="protein sequence ID" value="AAM13176.1"/>
    <property type="molecule type" value="mRNA"/>
</dbReference>
<dbReference type="EMBL" id="BT029495">
    <property type="protein sequence ID" value="ABL66752.1"/>
    <property type="molecule type" value="mRNA"/>
</dbReference>
<dbReference type="RefSeq" id="NP_566580.1">
    <molecule id="Q8RWC9-1"/>
    <property type="nucleotide sequence ID" value="NM_112631.3"/>
</dbReference>
<dbReference type="RefSeq" id="NP_974328.1">
    <molecule id="Q8RWC9-2"/>
    <property type="nucleotide sequence ID" value="NM_202599.2"/>
</dbReference>
<dbReference type="SMR" id="Q8RWC9"/>
<dbReference type="BioGRID" id="6349">
    <property type="interactions" value="18"/>
</dbReference>
<dbReference type="FunCoup" id="Q8RWC9">
    <property type="interactions" value="1373"/>
</dbReference>
<dbReference type="IntAct" id="Q8RWC9">
    <property type="interactions" value="10"/>
</dbReference>
<dbReference type="STRING" id="3702.Q8RWC9"/>
<dbReference type="iPTMnet" id="Q8RWC9"/>
<dbReference type="PaxDb" id="3702-AT3G17510.1"/>
<dbReference type="EnsemblPlants" id="AT3G17510.1">
    <molecule id="Q8RWC9-1"/>
    <property type="protein sequence ID" value="AT3G17510.1"/>
    <property type="gene ID" value="AT3G17510"/>
</dbReference>
<dbReference type="EnsemblPlants" id="AT3G17510.2">
    <molecule id="Q8RWC9-2"/>
    <property type="protein sequence ID" value="AT3G17510.2"/>
    <property type="gene ID" value="AT3G17510"/>
</dbReference>
<dbReference type="GeneID" id="821016"/>
<dbReference type="Gramene" id="AT3G17510.1">
    <molecule id="Q8RWC9-1"/>
    <property type="protein sequence ID" value="AT3G17510.1"/>
    <property type="gene ID" value="AT3G17510"/>
</dbReference>
<dbReference type="Gramene" id="AT3G17510.2">
    <molecule id="Q8RWC9-2"/>
    <property type="protein sequence ID" value="AT3G17510.2"/>
    <property type="gene ID" value="AT3G17510"/>
</dbReference>
<dbReference type="KEGG" id="ath:AT3G17510"/>
<dbReference type="Araport" id="AT3G17510"/>
<dbReference type="TAIR" id="AT3G17510">
    <property type="gene designation" value="CIPK1"/>
</dbReference>
<dbReference type="eggNOG" id="KOG0583">
    <property type="taxonomic scope" value="Eukaryota"/>
</dbReference>
<dbReference type="HOGENOM" id="CLU_000288_59_0_1"/>
<dbReference type="InParanoid" id="Q8RWC9"/>
<dbReference type="OMA" id="KSHGDPI"/>
<dbReference type="OrthoDB" id="193931at2759"/>
<dbReference type="PhylomeDB" id="Q8RWC9"/>
<dbReference type="SABIO-RK" id="Q8RWC9"/>
<dbReference type="PRO" id="PR:Q8RWC9"/>
<dbReference type="Proteomes" id="UP000006548">
    <property type="component" value="Chromosome 3"/>
</dbReference>
<dbReference type="ExpressionAtlas" id="Q8RWC9">
    <property type="expression patterns" value="baseline and differential"/>
</dbReference>
<dbReference type="GO" id="GO:0005886">
    <property type="term" value="C:plasma membrane"/>
    <property type="evidence" value="ECO:0000314"/>
    <property type="project" value="TAIR"/>
</dbReference>
<dbReference type="GO" id="GO:0005524">
    <property type="term" value="F:ATP binding"/>
    <property type="evidence" value="ECO:0007669"/>
    <property type="project" value="UniProtKB-KW"/>
</dbReference>
<dbReference type="GO" id="GO:0106310">
    <property type="term" value="F:protein serine kinase activity"/>
    <property type="evidence" value="ECO:0007669"/>
    <property type="project" value="RHEA"/>
</dbReference>
<dbReference type="GO" id="GO:0004674">
    <property type="term" value="F:protein serine/threonine kinase activity"/>
    <property type="evidence" value="ECO:0007669"/>
    <property type="project" value="UniProtKB-KW"/>
</dbReference>
<dbReference type="GO" id="GO:0009737">
    <property type="term" value="P:response to abscisic acid"/>
    <property type="evidence" value="ECO:0000315"/>
    <property type="project" value="TAIR"/>
</dbReference>
<dbReference type="GO" id="GO:0006970">
    <property type="term" value="P:response to osmotic stress"/>
    <property type="evidence" value="ECO:0000315"/>
    <property type="project" value="TAIR"/>
</dbReference>
<dbReference type="GO" id="GO:0009651">
    <property type="term" value="P:response to salt stress"/>
    <property type="evidence" value="ECO:0000315"/>
    <property type="project" value="TAIR"/>
</dbReference>
<dbReference type="GO" id="GO:0007165">
    <property type="term" value="P:signal transduction"/>
    <property type="evidence" value="ECO:0007669"/>
    <property type="project" value="InterPro"/>
</dbReference>
<dbReference type="CDD" id="cd12195">
    <property type="entry name" value="CIPK_C"/>
    <property type="match status" value="1"/>
</dbReference>
<dbReference type="CDD" id="cd14663">
    <property type="entry name" value="STKc_SnRK3"/>
    <property type="match status" value="1"/>
</dbReference>
<dbReference type="FunFam" id="1.10.510.10:FF:000279">
    <property type="entry name" value="Non-specific serine/threonine protein kinase"/>
    <property type="match status" value="1"/>
</dbReference>
<dbReference type="FunFam" id="3.30.200.20:FF:000096">
    <property type="entry name" value="Non-specific serine/threonine protein kinase"/>
    <property type="match status" value="1"/>
</dbReference>
<dbReference type="FunFam" id="3.30.310.80:FF:000015">
    <property type="entry name" value="Non-specific serine/threonine protein kinase"/>
    <property type="match status" value="1"/>
</dbReference>
<dbReference type="Gene3D" id="3.30.310.80">
    <property type="entry name" value="Kinase associated domain 1, KA1"/>
    <property type="match status" value="1"/>
</dbReference>
<dbReference type="Gene3D" id="1.10.510.10">
    <property type="entry name" value="Transferase(Phosphotransferase) domain 1"/>
    <property type="match status" value="1"/>
</dbReference>
<dbReference type="InterPro" id="IPR011009">
    <property type="entry name" value="Kinase-like_dom_sf"/>
</dbReference>
<dbReference type="InterPro" id="IPR018451">
    <property type="entry name" value="NAF/FISL_domain"/>
</dbReference>
<dbReference type="InterPro" id="IPR004041">
    <property type="entry name" value="NAF_dom"/>
</dbReference>
<dbReference type="InterPro" id="IPR000719">
    <property type="entry name" value="Prot_kinase_dom"/>
</dbReference>
<dbReference type="InterPro" id="IPR017441">
    <property type="entry name" value="Protein_kinase_ATP_BS"/>
</dbReference>
<dbReference type="InterPro" id="IPR008271">
    <property type="entry name" value="Ser/Thr_kinase_AS"/>
</dbReference>
<dbReference type="PANTHER" id="PTHR43895">
    <property type="entry name" value="CALCIUM/CALMODULIN-DEPENDENT PROTEIN KINASE KINASE-RELATED"/>
    <property type="match status" value="1"/>
</dbReference>
<dbReference type="PANTHER" id="PTHR43895:SF65">
    <property type="entry name" value="CBL-INTERACTING PROTEIN KINASE 21"/>
    <property type="match status" value="1"/>
</dbReference>
<dbReference type="Pfam" id="PF03822">
    <property type="entry name" value="NAF"/>
    <property type="match status" value="1"/>
</dbReference>
<dbReference type="Pfam" id="PF00069">
    <property type="entry name" value="Pkinase"/>
    <property type="match status" value="1"/>
</dbReference>
<dbReference type="SMART" id="SM00220">
    <property type="entry name" value="S_TKc"/>
    <property type="match status" value="1"/>
</dbReference>
<dbReference type="SUPFAM" id="SSF56112">
    <property type="entry name" value="Protein kinase-like (PK-like)"/>
    <property type="match status" value="1"/>
</dbReference>
<dbReference type="PROSITE" id="PS50816">
    <property type="entry name" value="NAF"/>
    <property type="match status" value="1"/>
</dbReference>
<dbReference type="PROSITE" id="PS00107">
    <property type="entry name" value="PROTEIN_KINASE_ATP"/>
    <property type="match status" value="1"/>
</dbReference>
<dbReference type="PROSITE" id="PS50011">
    <property type="entry name" value="PROTEIN_KINASE_DOM"/>
    <property type="match status" value="1"/>
</dbReference>
<dbReference type="PROSITE" id="PS00108">
    <property type="entry name" value="PROTEIN_KINASE_ST"/>
    <property type="match status" value="1"/>
</dbReference>
<comment type="function">
    <text evidence="12">CIPK serine-threonine protein kinases interact with CBL proteins. Binding of a CBL protein to the regulatory NAF domain of CIPK protein lead to the activation of the kinase in a calcium-dependent manner.</text>
</comment>
<comment type="catalytic activity">
    <reaction evidence="12">
        <text>L-seryl-[protein] + ATP = O-phospho-L-seryl-[protein] + ADP + H(+)</text>
        <dbReference type="Rhea" id="RHEA:17989"/>
        <dbReference type="Rhea" id="RHEA-COMP:9863"/>
        <dbReference type="Rhea" id="RHEA-COMP:11604"/>
        <dbReference type="ChEBI" id="CHEBI:15378"/>
        <dbReference type="ChEBI" id="CHEBI:29999"/>
        <dbReference type="ChEBI" id="CHEBI:30616"/>
        <dbReference type="ChEBI" id="CHEBI:83421"/>
        <dbReference type="ChEBI" id="CHEBI:456216"/>
        <dbReference type="EC" id="2.7.11.1"/>
    </reaction>
</comment>
<comment type="catalytic activity">
    <reaction evidence="12">
        <text>L-threonyl-[protein] + ATP = O-phospho-L-threonyl-[protein] + ADP + H(+)</text>
        <dbReference type="Rhea" id="RHEA:46608"/>
        <dbReference type="Rhea" id="RHEA-COMP:11060"/>
        <dbReference type="Rhea" id="RHEA-COMP:11605"/>
        <dbReference type="ChEBI" id="CHEBI:15378"/>
        <dbReference type="ChEBI" id="CHEBI:30013"/>
        <dbReference type="ChEBI" id="CHEBI:30616"/>
        <dbReference type="ChEBI" id="CHEBI:61977"/>
        <dbReference type="ChEBI" id="CHEBI:456216"/>
        <dbReference type="EC" id="2.7.11.1"/>
    </reaction>
</comment>
<comment type="cofactor">
    <cofactor evidence="12">
        <name>Mn(2+)</name>
        <dbReference type="ChEBI" id="CHEBI:29035"/>
    </cofactor>
</comment>
<comment type="biophysicochemical properties">
    <kinetics>
        <KM evidence="12">15.2 uM for synthetic substrate</KM>
        <Vmax evidence="12">146.1 pmol/min/mg enzyme</Vmax>
    </kinetics>
</comment>
<comment type="subunit">
    <text evidence="7 8 9 10 11">Interacts with CBL1 (PubMed:10590166, PubMed:11115898, PubMed:14730064). Interacts with CBL2 (PubMed:11230129). Interacts with CBL3 (PubMed:11115898, PubMed:11230129). Interacts with CBL9 (PubMed:14730064). Interacts with ECT1 and ECT2 (PubMed:16113215).</text>
</comment>
<comment type="interaction">
    <interactant intactId="EBI-1748677">
        <id>Q8RWC9</id>
    </interactant>
    <interactant intactId="EBI-974530">
        <id>O81445</id>
        <label>CBL1</label>
    </interactant>
    <organismsDiffer>false</organismsDiffer>
    <experiments>10</experiments>
</comment>
<comment type="interaction">
    <interactant intactId="EBI-1748677">
        <id>Q8RWC9</id>
    </interactant>
    <interactant intactId="EBI-485991">
        <id>Q8LAS7</id>
        <label>CBL2</label>
    </interactant>
    <organismsDiffer>false</organismsDiffer>
    <experiments>4</experiments>
</comment>
<comment type="interaction">
    <interactant intactId="EBI-1748677">
        <id>Q8RWC9</id>
    </interactant>
    <interactant intactId="EBI-637358">
        <id>Q8LEM7</id>
        <label>CBL3</label>
    </interactant>
    <organismsDiffer>false</organismsDiffer>
    <experiments>4</experiments>
</comment>
<comment type="interaction">
    <interactant intactId="EBI-1748677">
        <id>Q8RWC9</id>
    </interactant>
    <interactant intactId="EBI-537541">
        <id>O81223</id>
        <label>CBL4</label>
    </interactant>
    <organismsDiffer>false</organismsDiffer>
    <experiments>3</experiments>
</comment>
<comment type="interaction">
    <interactant intactId="EBI-1748677">
        <id>Q8RWC9</id>
    </interactant>
    <interactant intactId="EBI-637381">
        <id>Q9LTB8</id>
        <label>CBL9</label>
    </interactant>
    <organismsDiffer>false</organismsDiffer>
    <experiments>5</experiments>
</comment>
<comment type="interaction">
    <interactant intactId="EBI-1748677">
        <id>Q8RWC9</id>
    </interactant>
    <interactant intactId="EBI-2368594">
        <id>Q3MK94</id>
        <label>ECT1</label>
    </interactant>
    <organismsDiffer>false</organismsDiffer>
    <experiments>4</experiments>
</comment>
<comment type="alternative products">
    <event type="alternative splicing"/>
    <isoform>
        <id>Q8RWC9-1</id>
        <name>1</name>
        <sequence type="displayed"/>
    </isoform>
    <isoform>
        <id>Q8RWC9-2</id>
        <name>2</name>
        <sequence type="described" ref="VSP_026063 VSP_026064"/>
    </isoform>
</comment>
<comment type="tissue specificity">
    <text evidence="7">Ubiquitous.</text>
</comment>
<comment type="domain">
    <text evidence="1">The activation loop within the kinase domain is the target of phosphorylation/activation by upstream protein kinases. The PPI motif mediates the interaction with the ABI (abscisic acid-insensitive) phosphatases (By similarity).</text>
</comment>
<comment type="PTM">
    <text evidence="12">Autophosphorylated.</text>
</comment>
<comment type="miscellaneous">
    <molecule>Isoform 2</molecule>
    <text evidence="14">May be due to intron retention.</text>
</comment>
<comment type="similarity">
    <text evidence="14">Belongs to the protein kinase superfamily. CAMK Ser/Thr protein kinase family. SNF1 subfamily.</text>
</comment>
<comment type="sequence caution" evidence="14">
    <conflict type="erroneous gene model prediction">
        <sequence resource="EMBL-CDS" id="BAB02040"/>
    </conflict>
</comment>
<protein>
    <recommendedName>
        <fullName>CBL-interacting serine/threonine-protein kinase 1</fullName>
        <ecNumber>2.7.11.1</ecNumber>
    </recommendedName>
    <alternativeName>
        <fullName>SNF1-related kinase 3.16</fullName>
    </alternativeName>
    <alternativeName>
        <fullName>SOS2-like protein kinase PKS13</fullName>
    </alternativeName>
</protein>
<keyword id="KW-0025">Alternative splicing</keyword>
<keyword id="KW-0067">ATP-binding</keyword>
<keyword id="KW-0418">Kinase</keyword>
<keyword id="KW-0547">Nucleotide-binding</keyword>
<keyword id="KW-0597">Phosphoprotein</keyword>
<keyword id="KW-1185">Reference proteome</keyword>
<keyword id="KW-0723">Serine/threonine-protein kinase</keyword>
<keyword id="KW-0808">Transferase</keyword>
<evidence type="ECO:0000250" key="1"/>
<evidence type="ECO:0000250" key="2">
    <source>
        <dbReference type="UniProtKB" id="Q38997"/>
    </source>
</evidence>
<evidence type="ECO:0000250" key="3">
    <source>
        <dbReference type="UniProtKB" id="Q93V58"/>
    </source>
</evidence>
<evidence type="ECO:0000255" key="4">
    <source>
        <dbReference type="PROSITE-ProRule" id="PRU00159"/>
    </source>
</evidence>
<evidence type="ECO:0000255" key="5">
    <source>
        <dbReference type="PROSITE-ProRule" id="PRU00256"/>
    </source>
</evidence>
<evidence type="ECO:0000255" key="6">
    <source>
        <dbReference type="PROSITE-ProRule" id="PRU10027"/>
    </source>
</evidence>
<evidence type="ECO:0000269" key="7">
    <source>
    </source>
</evidence>
<evidence type="ECO:0000269" key="8">
    <source>
    </source>
</evidence>
<evidence type="ECO:0000269" key="9">
    <source>
    </source>
</evidence>
<evidence type="ECO:0000269" key="10">
    <source>
    </source>
</evidence>
<evidence type="ECO:0000269" key="11">
    <source>
    </source>
</evidence>
<evidence type="ECO:0000269" key="12">
    <source>
    </source>
</evidence>
<evidence type="ECO:0000303" key="13">
    <source ref="5"/>
</evidence>
<evidence type="ECO:0000305" key="14"/>
<name>CIPK1_ARATH</name>
<organism>
    <name type="scientific">Arabidopsis thaliana</name>
    <name type="common">Mouse-ear cress</name>
    <dbReference type="NCBI Taxonomy" id="3702"/>
    <lineage>
        <taxon>Eukaryota</taxon>
        <taxon>Viridiplantae</taxon>
        <taxon>Streptophyta</taxon>
        <taxon>Embryophyta</taxon>
        <taxon>Tracheophyta</taxon>
        <taxon>Spermatophyta</taxon>
        <taxon>Magnoliopsida</taxon>
        <taxon>eudicotyledons</taxon>
        <taxon>Gunneridae</taxon>
        <taxon>Pentapetalae</taxon>
        <taxon>rosids</taxon>
        <taxon>malvids</taxon>
        <taxon>Brassicales</taxon>
        <taxon>Brassicaceae</taxon>
        <taxon>Camelineae</taxon>
        <taxon>Arabidopsis</taxon>
    </lineage>
</organism>
<reference key="1">
    <citation type="journal article" date="1999" name="Plant Cell">
        <title>Novel protein kinases associated with calcineurin B-like calcium sensors in Arabidopsis.</title>
        <authorList>
            <person name="Shi J."/>
            <person name="Kim K.-N."/>
            <person name="Ritz O."/>
            <person name="Albrecht V."/>
            <person name="Gupta R."/>
            <person name="Harter K."/>
            <person name="Luan S."/>
            <person name="Kudla J."/>
        </authorList>
    </citation>
    <scope>NUCLEOTIDE SEQUENCE [MRNA] (ISOFORM 1)</scope>
    <scope>TISSUE SPECIFICITY</scope>
    <scope>INTERACTION WITH CBL1</scope>
</reference>
<reference key="2">
    <citation type="journal article" date="2000" name="DNA Res.">
        <title>Structural analysis of Arabidopsis thaliana chromosome 3. I. Sequence features of the regions of 4,504,864 bp covered by sixty P1 and TAC clones.</title>
        <authorList>
            <person name="Sato S."/>
            <person name="Nakamura Y."/>
            <person name="Kaneko T."/>
            <person name="Katoh T."/>
            <person name="Asamizu E."/>
            <person name="Tabata S."/>
        </authorList>
    </citation>
    <scope>NUCLEOTIDE SEQUENCE [LARGE SCALE GENOMIC DNA]</scope>
    <source>
        <strain>cv. Columbia</strain>
    </source>
</reference>
<reference key="3">
    <citation type="journal article" date="2017" name="Plant J.">
        <title>Araport11: a complete reannotation of the Arabidopsis thaliana reference genome.</title>
        <authorList>
            <person name="Cheng C.Y."/>
            <person name="Krishnakumar V."/>
            <person name="Chan A.P."/>
            <person name="Thibaud-Nissen F."/>
            <person name="Schobel S."/>
            <person name="Town C.D."/>
        </authorList>
    </citation>
    <scope>GENOME REANNOTATION</scope>
    <source>
        <strain>cv. Columbia</strain>
    </source>
</reference>
<reference key="4">
    <citation type="journal article" date="2003" name="Science">
        <title>Empirical analysis of transcriptional activity in the Arabidopsis genome.</title>
        <authorList>
            <person name="Yamada K."/>
            <person name="Lim J."/>
            <person name="Dale J.M."/>
            <person name="Chen H."/>
            <person name="Shinn P."/>
            <person name="Palm C.J."/>
            <person name="Southwick A.M."/>
            <person name="Wu H.C."/>
            <person name="Kim C.J."/>
            <person name="Nguyen M."/>
            <person name="Pham P.K."/>
            <person name="Cheuk R.F."/>
            <person name="Karlin-Newmann G."/>
            <person name="Liu S.X."/>
            <person name="Lam B."/>
            <person name="Sakano H."/>
            <person name="Wu T."/>
            <person name="Yu G."/>
            <person name="Miranda M."/>
            <person name="Quach H.L."/>
            <person name="Tripp M."/>
            <person name="Chang C.H."/>
            <person name="Lee J.M."/>
            <person name="Toriumi M.J."/>
            <person name="Chan M.M."/>
            <person name="Tang C.C."/>
            <person name="Onodera C.S."/>
            <person name="Deng J.M."/>
            <person name="Akiyama K."/>
            <person name="Ansari Y."/>
            <person name="Arakawa T."/>
            <person name="Banh J."/>
            <person name="Banno F."/>
            <person name="Bowser L."/>
            <person name="Brooks S.Y."/>
            <person name="Carninci P."/>
            <person name="Chao Q."/>
            <person name="Choy N."/>
            <person name="Enju A."/>
            <person name="Goldsmith A.D."/>
            <person name="Gurjal M."/>
            <person name="Hansen N.F."/>
            <person name="Hayashizaki Y."/>
            <person name="Johnson-Hopson C."/>
            <person name="Hsuan V.W."/>
            <person name="Iida K."/>
            <person name="Karnes M."/>
            <person name="Khan S."/>
            <person name="Koesema E."/>
            <person name="Ishida J."/>
            <person name="Jiang P.X."/>
            <person name="Jones T."/>
            <person name="Kawai J."/>
            <person name="Kamiya A."/>
            <person name="Meyers C."/>
            <person name="Nakajima M."/>
            <person name="Narusaka M."/>
            <person name="Seki M."/>
            <person name="Sakurai T."/>
            <person name="Satou M."/>
            <person name="Tamse R."/>
            <person name="Vaysberg M."/>
            <person name="Wallender E.K."/>
            <person name="Wong C."/>
            <person name="Yamamura Y."/>
            <person name="Yuan S."/>
            <person name="Shinozaki K."/>
            <person name="Davis R.W."/>
            <person name="Theologis A."/>
            <person name="Ecker J.R."/>
        </authorList>
    </citation>
    <scope>NUCLEOTIDE SEQUENCE [LARGE SCALE MRNA] (ISOFORM 1)</scope>
    <source>
        <strain>cv. Columbia</strain>
    </source>
</reference>
<reference key="5">
    <citation type="submission" date="2006-12" db="EMBL/GenBank/DDBJ databases">
        <title>Arabidopsis ORF clones.</title>
        <authorList>
            <person name="Bautista V.R."/>
            <person name="Kim C.J."/>
            <person name="Chen H."/>
            <person name="Quinitio C."/>
            <person name="Ecker J.R."/>
        </authorList>
    </citation>
    <scope>NUCLEOTIDE SEQUENCE [LARGE SCALE MRNA] (ISOFORM 2)</scope>
    <source>
        <strain>cv. Columbia</strain>
    </source>
</reference>
<reference key="6">
    <citation type="journal article" date="2000" name="Plant Physiol.">
        <title>Interaction specificity of Arabidopsis calcineurin B-like calcium sensors and their target kinases.</title>
        <authorList>
            <person name="Kim K.-N."/>
            <person name="Cheong Y.H."/>
            <person name="Gupta R."/>
            <person name="Luan S."/>
        </authorList>
    </citation>
    <scope>INTERACTION WITH CBL1 AND CBL3</scope>
    <source>
        <strain>cv. Columbia</strain>
    </source>
</reference>
<reference key="7">
    <citation type="journal article" date="2001" name="EMBO J.">
        <title>The NAF domain defines a novel protein-protein interaction module conserved in Ca(2+)-regulated kinases.</title>
        <authorList>
            <person name="Albrecht V."/>
            <person name="Ritz O."/>
            <person name="Linder S."/>
            <person name="Harter K."/>
            <person name="Kudla J."/>
        </authorList>
    </citation>
    <scope>INTERACTION WITH CBL2 AND CBL3</scope>
</reference>
<reference key="8">
    <citation type="journal article" date="2003" name="Plant Physiol.">
        <title>The Arabidopsis CDPK-SnRK superfamily of protein kinases.</title>
        <authorList>
            <person name="Hrabak E.M."/>
            <person name="Chan C.W.M."/>
            <person name="Gribskov M."/>
            <person name="Harper J.F."/>
            <person name="Choi J.H."/>
            <person name="Halford N."/>
            <person name="Kudla J."/>
            <person name="Luan S."/>
            <person name="Nimmo H.G."/>
            <person name="Sussman M.R."/>
            <person name="Thomas M."/>
            <person name="Walker-Simmons K."/>
            <person name="Zhu J.-K."/>
            <person name="Harmon A.C."/>
        </authorList>
    </citation>
    <scope>GENE FAMILY</scope>
    <scope>NOMENCLATURE</scope>
</reference>
<reference key="9">
    <citation type="journal article" date="2004" name="Plant Physiol.">
        <title>Calcium sensors and their interacting protein kinases: genomics of the Arabidopsis and rice CBL-CIPK signaling networks.</title>
        <authorList>
            <person name="Kolukisaoglu U."/>
            <person name="Weinl S."/>
            <person name="Blazevic D."/>
            <person name="Batistic O."/>
            <person name="Kudla J."/>
        </authorList>
    </citation>
    <scope>INTERACTION WITH CBL1 AND CBL9</scope>
</reference>
<reference key="10">
    <citation type="journal article" date="2005" name="Plant Physiol.">
        <title>Novel CIPK1-associated proteins in Arabidopsis contain an evolutionarily conserved C-terminal region that mediates nuclear localization.</title>
        <authorList>
            <person name="Ok S.H."/>
            <person name="Jeong H.J."/>
            <person name="Bae J.M."/>
            <person name="Shin J.S."/>
            <person name="Luan S."/>
            <person name="Kim K.N."/>
        </authorList>
    </citation>
    <scope>INTERACTION WITH ECT1 AND ECT2</scope>
    <source>
        <strain>cv. Columbia</strain>
    </source>
</reference>
<reference key="11">
    <citation type="journal article" date="2012" name="J. Biol. Chem.">
        <title>Phosphorylation of calcineurin B-like (CBL) calcium sensor proteins by their CBL-interacting protein kinases (CIPKs) is required for full activity of CBL-CIPK complexes toward their target proteins.</title>
        <authorList>
            <person name="Hashimoto K."/>
            <person name="Eckert C."/>
            <person name="Anschuetz U."/>
            <person name="Scholz M."/>
            <person name="Held K."/>
            <person name="Waadt R."/>
            <person name="Reyer A."/>
            <person name="Hippler M."/>
            <person name="Becker D."/>
            <person name="Kudla J."/>
        </authorList>
    </citation>
    <scope>FUNCTION</scope>
    <scope>CATALYTIC ACTIVITY</scope>
    <scope>COFACTOR</scope>
    <scope>BIOPHYSICOCHEMICAL PROPERTIES</scope>
    <scope>PHOSPHORYLATION</scope>
</reference>
<gene>
    <name type="primary">CIPK1</name>
    <name type="synonym">PKS13</name>
    <name type="synonym">SnRK3.16</name>
    <name type="ordered locus">At3g17510</name>
    <name type="ORF">MKP6.6</name>
</gene>
<feature type="chain" id="PRO_0000085861" description="CBL-interacting serine/threonine-protein kinase 1">
    <location>
        <begin position="1"/>
        <end position="444"/>
    </location>
</feature>
<feature type="domain" description="Protein kinase" evidence="4">
    <location>
        <begin position="20"/>
        <end position="275"/>
    </location>
</feature>
<feature type="domain" description="NAF" evidence="5">
    <location>
        <begin position="313"/>
        <end position="337"/>
    </location>
</feature>
<feature type="region of interest" description="Activation loop" evidence="1">
    <location>
        <begin position="161"/>
        <end position="190"/>
    </location>
</feature>
<feature type="region of interest" description="PPI" evidence="1">
    <location>
        <begin position="343"/>
        <end position="372"/>
    </location>
</feature>
<feature type="active site" description="Proton acceptor" evidence="4 6">
    <location>
        <position position="143"/>
    </location>
</feature>
<feature type="binding site" evidence="4">
    <location>
        <begin position="26"/>
        <end position="34"/>
    </location>
    <ligand>
        <name>ATP</name>
        <dbReference type="ChEBI" id="CHEBI:30616"/>
    </ligand>
</feature>
<feature type="binding site" evidence="4">
    <location>
        <position position="49"/>
    </location>
    <ligand>
        <name>ATP</name>
        <dbReference type="ChEBI" id="CHEBI:30616"/>
    </ligand>
</feature>
<feature type="modified residue" description="Phosphoserine" evidence="3">
    <location>
        <position position="165"/>
    </location>
</feature>
<feature type="modified residue" description="Phosphothreonine" evidence="2">
    <location>
        <position position="179"/>
    </location>
</feature>
<feature type="splice variant" id="VSP_026063" description="In isoform 2." evidence="13">
    <location>
        <begin position="1"/>
        <end position="80"/>
    </location>
</feature>
<feature type="splice variant" id="VSP_026064" description="In isoform 2." evidence="13">
    <original>VRLHE</original>
    <variation>MVIMQ</variation>
    <location>
        <begin position="81"/>
        <end position="85"/>
    </location>
</feature>
<feature type="sequence conflict" description="In Ref. 1; AAG28776." evidence="14" ref="1">
    <original>T</original>
    <variation>N</variation>
    <location>
        <position position="179"/>
    </location>
</feature>
<feature type="sequence conflict" description="In Ref. 4; AAM13176." evidence="14" ref="4">
    <original>D</original>
    <variation>N</variation>
    <location>
        <position position="237"/>
    </location>
</feature>
<feature type="sequence conflict" description="In Ref. 1; AAG28776." evidence="14" ref="1">
    <original>K</original>
    <variation>N</variation>
    <location>
        <position position="382"/>
    </location>
</feature>
<feature type="sequence conflict" description="In Ref. 1; AAG28776." evidence="14" ref="1">
    <original>N</original>
    <variation>T</variation>
    <location>
        <position position="387"/>
    </location>
</feature>
<accession>Q8RWC9</accession>
<accession>Q3EB49</accession>
<accession>Q9FUK2</accession>
<accession>Q9LUP6</accession>